<dbReference type="EC" id="1.14.11.53" evidence="2"/>
<dbReference type="RefSeq" id="NP_001178572.1">
    <property type="nucleotide sequence ID" value="NM_001191643.1"/>
</dbReference>
<dbReference type="SMR" id="D3ZKD3"/>
<dbReference type="FunCoup" id="D3ZKD3">
    <property type="interactions" value="1750"/>
</dbReference>
<dbReference type="STRING" id="10116.ENSRNOP00000034155"/>
<dbReference type="iPTMnet" id="D3ZKD3"/>
<dbReference type="PhosphoSitePlus" id="D3ZKD3"/>
<dbReference type="jPOST" id="D3ZKD3"/>
<dbReference type="PaxDb" id="10116-ENSRNOP00000034155"/>
<dbReference type="PeptideAtlas" id="D3ZKD3"/>
<dbReference type="Ensembl" id="ENSRNOT00000034006.6">
    <property type="protein sequence ID" value="ENSRNOP00000034155.3"/>
    <property type="gene ID" value="ENSRNOG00000028341.6"/>
</dbReference>
<dbReference type="GeneID" id="303193"/>
<dbReference type="KEGG" id="rno:303193"/>
<dbReference type="UCSC" id="RGD:1309496">
    <property type="organism name" value="rat"/>
</dbReference>
<dbReference type="AGR" id="RGD:1309496"/>
<dbReference type="CTD" id="54890"/>
<dbReference type="RGD" id="1309496">
    <property type="gene designation" value="Alkbh5"/>
</dbReference>
<dbReference type="eggNOG" id="KOG4176">
    <property type="taxonomic scope" value="Eukaryota"/>
</dbReference>
<dbReference type="GeneTree" id="ENSGT00390000009298"/>
<dbReference type="HOGENOM" id="CLU_047472_1_0_1"/>
<dbReference type="InParanoid" id="D3ZKD3"/>
<dbReference type="OMA" id="GWVHELV"/>
<dbReference type="OrthoDB" id="271595at2759"/>
<dbReference type="PhylomeDB" id="D3ZKD3"/>
<dbReference type="TreeFam" id="TF329212"/>
<dbReference type="Reactome" id="R-RNO-73943">
    <property type="pathway name" value="Reversal of alkylation damage by DNA dioxygenases"/>
</dbReference>
<dbReference type="PRO" id="PR:D3ZKD3"/>
<dbReference type="Proteomes" id="UP000002494">
    <property type="component" value="Chromosome 10"/>
</dbReference>
<dbReference type="Bgee" id="ENSRNOG00000028341">
    <property type="expression patterns" value="Expressed in skeletal muscle tissue and 19 other cell types or tissues"/>
</dbReference>
<dbReference type="GO" id="GO:0005829">
    <property type="term" value="C:cytosol"/>
    <property type="evidence" value="ECO:0007669"/>
    <property type="project" value="Ensembl"/>
</dbReference>
<dbReference type="GO" id="GO:0005794">
    <property type="term" value="C:Golgi apparatus"/>
    <property type="evidence" value="ECO:0007669"/>
    <property type="project" value="Ensembl"/>
</dbReference>
<dbReference type="GO" id="GO:0016607">
    <property type="term" value="C:nuclear speck"/>
    <property type="evidence" value="ECO:0000250"/>
    <property type="project" value="UniProtKB"/>
</dbReference>
<dbReference type="GO" id="GO:0005634">
    <property type="term" value="C:nucleus"/>
    <property type="evidence" value="ECO:0000250"/>
    <property type="project" value="UniProtKB"/>
</dbReference>
<dbReference type="GO" id="GO:0042382">
    <property type="term" value="C:paraspeckles"/>
    <property type="evidence" value="ECO:0000250"/>
    <property type="project" value="UniProtKB"/>
</dbReference>
<dbReference type="GO" id="GO:0016706">
    <property type="term" value="F:2-oxoglutarate-dependent dioxygenase activity"/>
    <property type="evidence" value="ECO:0000250"/>
    <property type="project" value="UniProtKB"/>
</dbReference>
<dbReference type="GO" id="GO:0046872">
    <property type="term" value="F:metal ion binding"/>
    <property type="evidence" value="ECO:0007669"/>
    <property type="project" value="UniProtKB-KW"/>
</dbReference>
<dbReference type="GO" id="GO:0140693">
    <property type="term" value="F:molecular condensate scaffold activity"/>
    <property type="evidence" value="ECO:0000250"/>
    <property type="project" value="UniProtKB"/>
</dbReference>
<dbReference type="GO" id="GO:1990931">
    <property type="term" value="F:mRNA N6-methyladenosine dioxygenase activity"/>
    <property type="evidence" value="ECO:0000250"/>
    <property type="project" value="UniProtKB"/>
</dbReference>
<dbReference type="GO" id="GO:0035515">
    <property type="term" value="F:oxidative RNA demethylase activity"/>
    <property type="evidence" value="ECO:0000318"/>
    <property type="project" value="GO_Central"/>
</dbReference>
<dbReference type="GO" id="GO:0030154">
    <property type="term" value="P:cell differentiation"/>
    <property type="evidence" value="ECO:0007669"/>
    <property type="project" value="UniProtKB-KW"/>
</dbReference>
<dbReference type="GO" id="GO:0046630">
    <property type="term" value="P:gamma-delta T cell proliferation"/>
    <property type="evidence" value="ECO:0000266"/>
    <property type="project" value="RGD"/>
</dbReference>
<dbReference type="GO" id="GO:0140694">
    <property type="term" value="P:membraneless organelle assembly"/>
    <property type="evidence" value="ECO:0000250"/>
    <property type="project" value="UniProtKB"/>
</dbReference>
<dbReference type="GO" id="GO:0061157">
    <property type="term" value="P:mRNA destabilization"/>
    <property type="evidence" value="ECO:0000250"/>
    <property type="project" value="UniProtKB"/>
</dbReference>
<dbReference type="GO" id="GO:0006397">
    <property type="term" value="P:mRNA processing"/>
    <property type="evidence" value="ECO:0007669"/>
    <property type="project" value="InterPro"/>
</dbReference>
<dbReference type="GO" id="GO:0010793">
    <property type="term" value="P:regulation of mRNA export from nucleus"/>
    <property type="evidence" value="ECO:0000250"/>
    <property type="project" value="UniProtKB"/>
</dbReference>
<dbReference type="GO" id="GO:0050684">
    <property type="term" value="P:regulation of mRNA processing"/>
    <property type="evidence" value="ECO:0000250"/>
    <property type="project" value="UniProtKB"/>
</dbReference>
<dbReference type="GO" id="GO:0043488">
    <property type="term" value="P:regulation of mRNA stability"/>
    <property type="evidence" value="ECO:0000250"/>
    <property type="project" value="UniProtKB"/>
</dbReference>
<dbReference type="GO" id="GO:0006417">
    <property type="term" value="P:regulation of translation"/>
    <property type="evidence" value="ECO:0000250"/>
    <property type="project" value="UniProtKB"/>
</dbReference>
<dbReference type="GO" id="GO:0001666">
    <property type="term" value="P:response to hypoxia"/>
    <property type="evidence" value="ECO:0000250"/>
    <property type="project" value="UniProtKB"/>
</dbReference>
<dbReference type="GO" id="GO:0007283">
    <property type="term" value="P:spermatogenesis"/>
    <property type="evidence" value="ECO:0000250"/>
    <property type="project" value="UniProtKB"/>
</dbReference>
<dbReference type="FunFam" id="2.60.120.590:FF:000002">
    <property type="entry name" value="RNA demethylase ALKBH5"/>
    <property type="match status" value="1"/>
</dbReference>
<dbReference type="Gene3D" id="2.60.120.590">
    <property type="entry name" value="Alpha-ketoglutarate-dependent dioxygenase AlkB-like"/>
    <property type="match status" value="1"/>
</dbReference>
<dbReference type="InterPro" id="IPR027450">
    <property type="entry name" value="AlkB-like"/>
</dbReference>
<dbReference type="InterPro" id="IPR037151">
    <property type="entry name" value="AlkB-like_sf"/>
</dbReference>
<dbReference type="InterPro" id="IPR032860">
    <property type="entry name" value="ALKBH5"/>
</dbReference>
<dbReference type="PANTHER" id="PTHR32074">
    <property type="entry name" value="RNA DEMETHYLASE ALKBH5"/>
    <property type="match status" value="1"/>
</dbReference>
<dbReference type="PANTHER" id="PTHR32074:SF2">
    <property type="entry name" value="RNA DEMETHYLASE ALKBH5"/>
    <property type="match status" value="1"/>
</dbReference>
<dbReference type="Pfam" id="PF13532">
    <property type="entry name" value="2OG-FeII_Oxy_2"/>
    <property type="match status" value="1"/>
</dbReference>
<dbReference type="SUPFAM" id="SSF51197">
    <property type="entry name" value="Clavaminate synthase-like"/>
    <property type="match status" value="1"/>
</dbReference>
<sequence length="395" mass="44453">MAAASGYTDLREKLKSMTSRDNYKAGSREAAAAAAAAVAAAAAAAAAAEPYPVSGTTKRKYQEDSDPERSDYEEHQLQKEEEARKVKSGIRQIRLFSQDECSKIEARIDEVVSRAEKGLYNEHTVDRAPLRNKYFFGEGYTYGAQLQKRGPGQERLYPPGDVDEIPEWVHQLVIQKLVEHRVIPEGFVNSAVINDYQPGGCIVSHVDPIHIFERPIVSVSFFSDSALCFGCKFQFKPIRVSEPVLSLPVRRGSVTVLSGYAADEITHCIRPQDIKERRAVIILRKTRLDAPRLETKSLSSSTLPPSYASDRLSGNTRDPALKPKRSHRKADPDAAHRPRILEMDKEENRRSVLLPTHRRRGSFSSENYWRKSYESSEDCPEAASSPTRKVKMRRH</sequence>
<keyword id="KW-0007">Acetylation</keyword>
<keyword id="KW-0175">Coiled coil</keyword>
<keyword id="KW-0221">Differentiation</keyword>
<keyword id="KW-0223">Dioxygenase</keyword>
<keyword id="KW-1015">Disulfide bond</keyword>
<keyword id="KW-0408">Iron</keyword>
<keyword id="KW-1017">Isopeptide bond</keyword>
<keyword id="KW-0479">Metal-binding</keyword>
<keyword id="KW-0488">Methylation</keyword>
<keyword id="KW-0539">Nucleus</keyword>
<keyword id="KW-0560">Oxidoreductase</keyword>
<keyword id="KW-0597">Phosphoprotein</keyword>
<keyword id="KW-1185">Reference proteome</keyword>
<keyword id="KW-0744">Spermatogenesis</keyword>
<keyword id="KW-0832">Ubl conjugation</keyword>
<gene>
    <name type="primary">Alkbh5</name>
</gene>
<evidence type="ECO:0000250" key="1">
    <source>
        <dbReference type="UniProtKB" id="Q3TSG4"/>
    </source>
</evidence>
<evidence type="ECO:0000250" key="2">
    <source>
        <dbReference type="UniProtKB" id="Q6P6C2"/>
    </source>
</evidence>
<evidence type="ECO:0000255" key="3"/>
<evidence type="ECO:0000256" key="4">
    <source>
        <dbReference type="SAM" id="MobiDB-lite"/>
    </source>
</evidence>
<evidence type="ECO:0000305" key="5"/>
<evidence type="ECO:0007744" key="6">
    <source>
    </source>
</evidence>
<reference key="1">
    <citation type="journal article" date="2004" name="Nature">
        <title>Genome sequence of the Brown Norway rat yields insights into mammalian evolution.</title>
        <authorList>
            <person name="Gibbs R.A."/>
            <person name="Weinstock G.M."/>
            <person name="Metzker M.L."/>
            <person name="Muzny D.M."/>
            <person name="Sodergren E.J."/>
            <person name="Scherer S."/>
            <person name="Scott G."/>
            <person name="Steffen D."/>
            <person name="Worley K.C."/>
            <person name="Burch P.E."/>
            <person name="Okwuonu G."/>
            <person name="Hines S."/>
            <person name="Lewis L."/>
            <person name="Deramo C."/>
            <person name="Delgado O."/>
            <person name="Dugan-Rocha S."/>
            <person name="Miner G."/>
            <person name="Morgan M."/>
            <person name="Hawes A."/>
            <person name="Gill R."/>
            <person name="Holt R.A."/>
            <person name="Adams M.D."/>
            <person name="Amanatides P.G."/>
            <person name="Baden-Tillson H."/>
            <person name="Barnstead M."/>
            <person name="Chin S."/>
            <person name="Evans C.A."/>
            <person name="Ferriera S."/>
            <person name="Fosler C."/>
            <person name="Glodek A."/>
            <person name="Gu Z."/>
            <person name="Jennings D."/>
            <person name="Kraft C.L."/>
            <person name="Nguyen T."/>
            <person name="Pfannkoch C.M."/>
            <person name="Sitter C."/>
            <person name="Sutton G.G."/>
            <person name="Venter J.C."/>
            <person name="Woodage T."/>
            <person name="Smith D."/>
            <person name="Lee H.-M."/>
            <person name="Gustafson E."/>
            <person name="Cahill P."/>
            <person name="Kana A."/>
            <person name="Doucette-Stamm L."/>
            <person name="Weinstock K."/>
            <person name="Fechtel K."/>
            <person name="Weiss R.B."/>
            <person name="Dunn D.M."/>
            <person name="Green E.D."/>
            <person name="Blakesley R.W."/>
            <person name="Bouffard G.G."/>
            <person name="De Jong P.J."/>
            <person name="Osoegawa K."/>
            <person name="Zhu B."/>
            <person name="Marra M."/>
            <person name="Schein J."/>
            <person name="Bosdet I."/>
            <person name="Fjell C."/>
            <person name="Jones S."/>
            <person name="Krzywinski M."/>
            <person name="Mathewson C."/>
            <person name="Siddiqui A."/>
            <person name="Wye N."/>
            <person name="McPherson J."/>
            <person name="Zhao S."/>
            <person name="Fraser C.M."/>
            <person name="Shetty J."/>
            <person name="Shatsman S."/>
            <person name="Geer K."/>
            <person name="Chen Y."/>
            <person name="Abramzon S."/>
            <person name="Nierman W.C."/>
            <person name="Havlak P.H."/>
            <person name="Chen R."/>
            <person name="Durbin K.J."/>
            <person name="Egan A."/>
            <person name="Ren Y."/>
            <person name="Song X.-Z."/>
            <person name="Li B."/>
            <person name="Liu Y."/>
            <person name="Qin X."/>
            <person name="Cawley S."/>
            <person name="Cooney A.J."/>
            <person name="D'Souza L.M."/>
            <person name="Martin K."/>
            <person name="Wu J.Q."/>
            <person name="Gonzalez-Garay M.L."/>
            <person name="Jackson A.R."/>
            <person name="Kalafus K.J."/>
            <person name="McLeod M.P."/>
            <person name="Milosavljevic A."/>
            <person name="Virk D."/>
            <person name="Volkov A."/>
            <person name="Wheeler D.A."/>
            <person name="Zhang Z."/>
            <person name="Bailey J.A."/>
            <person name="Eichler E.E."/>
            <person name="Tuzun E."/>
            <person name="Birney E."/>
            <person name="Mongin E."/>
            <person name="Ureta-Vidal A."/>
            <person name="Woodwark C."/>
            <person name="Zdobnov E."/>
            <person name="Bork P."/>
            <person name="Suyama M."/>
            <person name="Torrents D."/>
            <person name="Alexandersson M."/>
            <person name="Trask B.J."/>
            <person name="Young J.M."/>
            <person name="Huang H."/>
            <person name="Wang H."/>
            <person name="Xing H."/>
            <person name="Daniels S."/>
            <person name="Gietzen D."/>
            <person name="Schmidt J."/>
            <person name="Stevens K."/>
            <person name="Vitt U."/>
            <person name="Wingrove J."/>
            <person name="Camara F."/>
            <person name="Mar Alba M."/>
            <person name="Abril J.F."/>
            <person name="Guigo R."/>
            <person name="Smit A."/>
            <person name="Dubchak I."/>
            <person name="Rubin E.M."/>
            <person name="Couronne O."/>
            <person name="Poliakov A."/>
            <person name="Huebner N."/>
            <person name="Ganten D."/>
            <person name="Goesele C."/>
            <person name="Hummel O."/>
            <person name="Kreitler T."/>
            <person name="Lee Y.-A."/>
            <person name="Monti J."/>
            <person name="Schulz H."/>
            <person name="Zimdahl H."/>
            <person name="Himmelbauer H."/>
            <person name="Lehrach H."/>
            <person name="Jacob H.J."/>
            <person name="Bromberg S."/>
            <person name="Gullings-Handley J."/>
            <person name="Jensen-Seaman M.I."/>
            <person name="Kwitek A.E."/>
            <person name="Lazar J."/>
            <person name="Pasko D."/>
            <person name="Tonellato P.J."/>
            <person name="Twigger S."/>
            <person name="Ponting C.P."/>
            <person name="Duarte J.M."/>
            <person name="Rice S."/>
            <person name="Goodstadt L."/>
            <person name="Beatson S.A."/>
            <person name="Emes R.D."/>
            <person name="Winter E.E."/>
            <person name="Webber C."/>
            <person name="Brandt P."/>
            <person name="Nyakatura G."/>
            <person name="Adetobi M."/>
            <person name="Chiaromonte F."/>
            <person name="Elnitski L."/>
            <person name="Eswara P."/>
            <person name="Hardison R.C."/>
            <person name="Hou M."/>
            <person name="Kolbe D."/>
            <person name="Makova K."/>
            <person name="Miller W."/>
            <person name="Nekrutenko A."/>
            <person name="Riemer C."/>
            <person name="Schwartz S."/>
            <person name="Taylor J."/>
            <person name="Yang S."/>
            <person name="Zhang Y."/>
            <person name="Lindpaintner K."/>
            <person name="Andrews T.D."/>
            <person name="Caccamo M."/>
            <person name="Clamp M."/>
            <person name="Clarke L."/>
            <person name="Curwen V."/>
            <person name="Durbin R.M."/>
            <person name="Eyras E."/>
            <person name="Searle S.M."/>
            <person name="Cooper G.M."/>
            <person name="Batzoglou S."/>
            <person name="Brudno M."/>
            <person name="Sidow A."/>
            <person name="Stone E.A."/>
            <person name="Payseur B.A."/>
            <person name="Bourque G."/>
            <person name="Lopez-Otin C."/>
            <person name="Puente X.S."/>
            <person name="Chakrabarti K."/>
            <person name="Chatterji S."/>
            <person name="Dewey C."/>
            <person name="Pachter L."/>
            <person name="Bray N."/>
            <person name="Yap V.B."/>
            <person name="Caspi A."/>
            <person name="Tesler G."/>
            <person name="Pevzner P.A."/>
            <person name="Haussler D."/>
            <person name="Roskin K.M."/>
            <person name="Baertsch R."/>
            <person name="Clawson H."/>
            <person name="Furey T.S."/>
            <person name="Hinrichs A.S."/>
            <person name="Karolchik D."/>
            <person name="Kent W.J."/>
            <person name="Rosenbloom K.R."/>
            <person name="Trumbower H."/>
            <person name="Weirauch M."/>
            <person name="Cooper D.N."/>
            <person name="Stenson P.D."/>
            <person name="Ma B."/>
            <person name="Brent M."/>
            <person name="Arumugam M."/>
            <person name="Shteynberg D."/>
            <person name="Copley R.R."/>
            <person name="Taylor M.S."/>
            <person name="Riethman H."/>
            <person name="Mudunuri U."/>
            <person name="Peterson J."/>
            <person name="Guyer M."/>
            <person name="Felsenfeld A."/>
            <person name="Old S."/>
            <person name="Mockrin S."/>
            <person name="Collins F.S."/>
        </authorList>
    </citation>
    <scope>NUCLEOTIDE SEQUENCE [LARGE SCALE GENOMIC DNA]</scope>
    <source>
        <strain>Brown Norway</strain>
    </source>
</reference>
<reference key="2">
    <citation type="journal article" date="2012" name="Nat. Commun.">
        <title>Quantitative maps of protein phosphorylation sites across 14 different rat organs and tissues.</title>
        <authorList>
            <person name="Lundby A."/>
            <person name="Secher A."/>
            <person name="Lage K."/>
            <person name="Nordsborg N.B."/>
            <person name="Dmytriyev A."/>
            <person name="Lundby C."/>
            <person name="Olsen J.V."/>
        </authorList>
    </citation>
    <scope>PHOSPHORYLATION [LARGE SCALE ANALYSIS] AT SER-65; SER-70 AND SER-362</scope>
    <scope>IDENTIFICATION BY MASS SPECTROMETRY [LARGE SCALE ANALYSIS]</scope>
</reference>
<name>ALKB5_RAT</name>
<proteinExistence type="evidence at protein level"/>
<feature type="initiator methionine" description="Removed" evidence="2">
    <location>
        <position position="1"/>
    </location>
</feature>
<feature type="chain" id="PRO_0000421247" description="RNA demethylase ALKBH5">
    <location>
        <begin position="2"/>
        <end position="395"/>
    </location>
</feature>
<feature type="region of interest" description="Disordered" evidence="4">
    <location>
        <begin position="1"/>
        <end position="28"/>
    </location>
</feature>
<feature type="region of interest" description="Disordered" evidence="4">
    <location>
        <begin position="47"/>
        <end position="83"/>
    </location>
</feature>
<feature type="region of interest" description="Disordered" evidence="4">
    <location>
        <begin position="294"/>
        <end position="395"/>
    </location>
</feature>
<feature type="coiled-coil region" evidence="3">
    <location>
        <begin position="68"/>
        <end position="117"/>
    </location>
</feature>
<feature type="compositionally biased region" description="Basic and acidic residues" evidence="4">
    <location>
        <begin position="60"/>
        <end position="83"/>
    </location>
</feature>
<feature type="compositionally biased region" description="Low complexity" evidence="4">
    <location>
        <begin position="296"/>
        <end position="306"/>
    </location>
</feature>
<feature type="compositionally biased region" description="Basic and acidic residues" evidence="4">
    <location>
        <begin position="329"/>
        <end position="350"/>
    </location>
</feature>
<feature type="active site" evidence="2">
    <location>
        <position position="140"/>
    </location>
</feature>
<feature type="binding site" evidence="2">
    <location>
        <position position="194"/>
    </location>
    <ligand>
        <name>2-oxoglutarate</name>
        <dbReference type="ChEBI" id="CHEBI:16810"/>
    </ligand>
</feature>
<feature type="binding site" evidence="2">
    <location>
        <position position="196"/>
    </location>
    <ligand>
        <name>2-oxoglutarate</name>
        <dbReference type="ChEBI" id="CHEBI:16810"/>
    </ligand>
</feature>
<feature type="binding site" evidence="2">
    <location>
        <position position="205"/>
    </location>
    <ligand>
        <name>2-oxoglutarate</name>
        <dbReference type="ChEBI" id="CHEBI:16810"/>
    </ligand>
</feature>
<feature type="binding site" evidence="2">
    <location>
        <position position="267"/>
    </location>
    <ligand>
        <name>2-oxoglutarate</name>
        <dbReference type="ChEBI" id="CHEBI:16810"/>
    </ligand>
</feature>
<feature type="binding site" evidence="2">
    <location>
        <position position="278"/>
    </location>
    <ligand>
        <name>2-oxoglutarate</name>
        <dbReference type="ChEBI" id="CHEBI:16810"/>
    </ligand>
</feature>
<feature type="modified residue" description="N-acetylalanine" evidence="2">
    <location>
        <position position="2"/>
    </location>
</feature>
<feature type="modified residue" description="Phosphoserine" evidence="6">
    <location>
        <position position="65"/>
    </location>
</feature>
<feature type="modified residue" description="Phosphoserine" evidence="6">
    <location>
        <position position="70"/>
    </location>
</feature>
<feature type="modified residue" description="Phosphotyrosine" evidence="2">
    <location>
        <position position="72"/>
    </location>
</feature>
<feature type="modified residue" description="Phosphoserine" evidence="2">
    <location>
        <position position="88"/>
    </location>
</feature>
<feature type="modified residue" description="N6-acetyllysine" evidence="2">
    <location>
        <position position="133"/>
    </location>
</feature>
<feature type="modified residue" description="N6-acetyllysine" evidence="2">
    <location>
        <position position="236"/>
    </location>
</feature>
<feature type="modified residue" description="Phosphoserine" evidence="2">
    <location>
        <position position="326"/>
    </location>
</feature>
<feature type="modified residue" description="Omega-N-methylarginine" evidence="2">
    <location>
        <position position="360"/>
    </location>
</feature>
<feature type="modified residue" description="Phosphoserine" evidence="6">
    <location>
        <position position="362"/>
    </location>
</feature>
<feature type="modified residue" description="Phosphoserine" evidence="1">
    <location>
        <position position="372"/>
    </location>
</feature>
<feature type="modified residue" description="Phosphoserine" evidence="2">
    <location>
        <position position="375"/>
    </location>
</feature>
<feature type="modified residue" description="Phosphoserine" evidence="1">
    <location>
        <position position="385"/>
    </location>
</feature>
<feature type="disulfide bond" evidence="2">
    <location>
        <begin position="231"/>
        <end position="268"/>
    </location>
</feature>
<feature type="cross-link" description="Glycyl lysine isopeptide (Lys-Gly) (interchain with G-Cter in ubiquitin)" evidence="2">
    <location>
        <position position="58"/>
    </location>
</feature>
<feature type="cross-link" description="Glycyl lysine isopeptide (Lys-Gly) (interchain with G-Cter in SUMO1)" evidence="2">
    <location>
        <position position="87"/>
    </location>
</feature>
<feature type="cross-link" description="Glycyl lysine isopeptide (Lys-Gly) (interchain with G-Cter in SUMO1)" evidence="2">
    <location>
        <position position="322"/>
    </location>
</feature>
<feature type="cross-link" description="Glycyl lysine isopeptide (Lys-Gly) (interchain with G-Cter in SUMO2)" evidence="2">
    <location>
        <position position="329"/>
    </location>
</feature>
<comment type="function">
    <text evidence="1 2">Dioxygenase that specifically demethylates N(6)-methyladenosine (m6A) RNA, the most prevalent internal modification of messenger RNA (mRNA) in higher eukaryotes (By similarity). Demethylates RNA by oxidative demethylation, which requires molecular oxygen, alpha-ketoglutarate and iron (By similarity). Demethylation of m6A mRNA affects mRNA processing, translation and export (By similarity). Can also demethylate N(6)-methyladenosine in single-stranded DNA (in vitro) (By similarity). Required for the late meiotic and haploid phases of spermatogenesis by mediating m6A demethylation in spermatocytes and round spermatids: m6A demethylation of target transcripts is required for correct splicing and the production of longer 3'-UTR mRNAs in male germ cells (By similarity). Involved in paraspeckle assembly, a nuclear membraneless organelle, by undergoing liquid-liquid phase separation (By similarity). Paraspeckle assembly is coupled with m6A demethylation of RNAs, such as NEAT1 non-coding RNA (By similarity). Also acts as a negative regulator of T-cell development: inhibits gamma-delta T-cell proliferation via demethylation of JAG1 and NOTCH2 transcripts (By similarity). Inhibits regulatory T-cell (Treg) recruitment by mediating demethylation and destabilization of CCL28 mRNAs (By similarity).</text>
</comment>
<comment type="catalytic activity">
    <reaction evidence="2">
        <text>an N(6)-methyladenosine in mRNA + 2-oxoglutarate + O2 = an adenosine in mRNA + formaldehyde + succinate + CO2</text>
        <dbReference type="Rhea" id="RHEA:49520"/>
        <dbReference type="Rhea" id="RHEA-COMP:12414"/>
        <dbReference type="Rhea" id="RHEA-COMP:12417"/>
        <dbReference type="ChEBI" id="CHEBI:15379"/>
        <dbReference type="ChEBI" id="CHEBI:16526"/>
        <dbReference type="ChEBI" id="CHEBI:16810"/>
        <dbReference type="ChEBI" id="CHEBI:16842"/>
        <dbReference type="ChEBI" id="CHEBI:30031"/>
        <dbReference type="ChEBI" id="CHEBI:74411"/>
        <dbReference type="ChEBI" id="CHEBI:74449"/>
        <dbReference type="EC" id="1.14.11.53"/>
    </reaction>
    <physiologicalReaction direction="left-to-right" evidence="2">
        <dbReference type="Rhea" id="RHEA:49521"/>
    </physiologicalReaction>
</comment>
<comment type="cofactor">
    <cofactor evidence="2">
        <name>Fe(2+)</name>
        <dbReference type="ChEBI" id="CHEBI:29033"/>
    </cofactor>
    <text evidence="2">Binds 1 Fe(2+) ion per subunit.</text>
</comment>
<comment type="activity regulation">
    <text evidence="2">RNA demethylase activity is inhibited following sumoylation. Inhibition is relieved following desumoylation.</text>
</comment>
<comment type="subunit">
    <text evidence="2">Monomer. Interacts with RBM33; promoting desumoylation by SENP1 and recruitment to N(6)-methyladenosine-containing mRNAs. Interacts (when acetylated by KAT8) with PSPC1; interaction facilitates recognition of N(6)-methyladenosine (m6A) mRNA.</text>
</comment>
<comment type="subcellular location">
    <subcellularLocation>
        <location evidence="2">Nucleus speckle</location>
    </subcellularLocation>
    <text evidence="2">Promotes formation and localizes to paraspeckles, a nuclear membraneless organelle.</text>
</comment>
<comment type="domain">
    <text evidence="2">The C-terminal disordered region undergoes liquid-liquid phase separation (LLPS) for the formation of paraspeckle membraneless compartment.</text>
</comment>
<comment type="PTM">
    <text evidence="2">Phosphorylated at Ser-88 and Ser-326 in response to reactive oxygen species (ROS), promoting sumoylation and inactivation.</text>
</comment>
<comment type="PTM">
    <text evidence="2">Acetylated by KAT8 at Lys-236, promoting interaction with PSPC1, thereby facilitating recognition of N(6)-methyladenosine (m6A) mRNA by ALKBH5. Deacetylated at Lys-236 by HDAC7.</text>
</comment>
<comment type="PTM">
    <text evidence="2">Sumoylated at Lys-87 and Lys-322 by PIAS4 following phosphorylation at Ser-88 and Ser-326 in response to reactive oxygen species (ROS), inhibiting the RNA demethylase activity. Desumoylated by SENP1; relieving RNA demethylase inhibition, leading to N(6)-methyladenosine-containing mRNAs demethylation.</text>
</comment>
<comment type="PTM">
    <text evidence="2">Ubiquitinated at Lys-58 via 'Lys-48'-linked polyubiquitin chain, leading to its degradation by the proteasome. Deubiquitinated at Lys-58 by USP9X, promoting its stabilizazion.</text>
</comment>
<comment type="similarity">
    <text evidence="5">Belongs to the alkB family.</text>
</comment>
<protein>
    <recommendedName>
        <fullName>RNA demethylase ALKBH5</fullName>
        <ecNumber evidence="2">1.14.11.53</ecNumber>
    </recommendedName>
    <alternativeName>
        <fullName>Alkylated DNA repair protein alkB homolog 5</fullName>
    </alternativeName>
    <alternativeName>
        <fullName>Alpha-ketoglutarate-dependent dioxygenase alkB homolog 5</fullName>
    </alternativeName>
</protein>
<organism>
    <name type="scientific">Rattus norvegicus</name>
    <name type="common">Rat</name>
    <dbReference type="NCBI Taxonomy" id="10116"/>
    <lineage>
        <taxon>Eukaryota</taxon>
        <taxon>Metazoa</taxon>
        <taxon>Chordata</taxon>
        <taxon>Craniata</taxon>
        <taxon>Vertebrata</taxon>
        <taxon>Euteleostomi</taxon>
        <taxon>Mammalia</taxon>
        <taxon>Eutheria</taxon>
        <taxon>Euarchontoglires</taxon>
        <taxon>Glires</taxon>
        <taxon>Rodentia</taxon>
        <taxon>Myomorpha</taxon>
        <taxon>Muroidea</taxon>
        <taxon>Muridae</taxon>
        <taxon>Murinae</taxon>
        <taxon>Rattus</taxon>
    </lineage>
</organism>
<accession>D3ZKD3</accession>